<accession>Q6LZD5</accession>
<name>FTTA_METMP</name>
<dbReference type="EC" id="3.1.-.-" evidence="1 2"/>
<dbReference type="EMBL" id="BX950229">
    <property type="protein sequence ID" value="CAF30250.1"/>
    <property type="molecule type" value="Genomic_DNA"/>
</dbReference>
<dbReference type="RefSeq" id="WP_011170638.1">
    <property type="nucleotide sequence ID" value="NC_005791.1"/>
</dbReference>
<dbReference type="SMR" id="Q6LZD5"/>
<dbReference type="STRING" id="267377.MMP0694"/>
<dbReference type="EnsemblBacteria" id="CAF30250">
    <property type="protein sequence ID" value="CAF30250"/>
    <property type="gene ID" value="MMP0694"/>
</dbReference>
<dbReference type="GeneID" id="37875225"/>
<dbReference type="KEGG" id="mmp:MMP0694"/>
<dbReference type="PATRIC" id="fig|267377.15.peg.711"/>
<dbReference type="eggNOG" id="arCOG00543">
    <property type="taxonomic scope" value="Archaea"/>
</dbReference>
<dbReference type="HOGENOM" id="CLU_009673_5_1_2"/>
<dbReference type="OrthoDB" id="7155at2157"/>
<dbReference type="Proteomes" id="UP000000590">
    <property type="component" value="Chromosome"/>
</dbReference>
<dbReference type="GO" id="GO:0005694">
    <property type="term" value="C:chromosome"/>
    <property type="evidence" value="ECO:0007669"/>
    <property type="project" value="UniProtKB-SubCell"/>
</dbReference>
<dbReference type="GO" id="GO:0003677">
    <property type="term" value="F:DNA binding"/>
    <property type="evidence" value="ECO:0007669"/>
    <property type="project" value="UniProtKB-KW"/>
</dbReference>
<dbReference type="GO" id="GO:0004527">
    <property type="term" value="F:exonuclease activity"/>
    <property type="evidence" value="ECO:0007669"/>
    <property type="project" value="UniProtKB-KW"/>
</dbReference>
<dbReference type="GO" id="GO:0046872">
    <property type="term" value="F:metal ion binding"/>
    <property type="evidence" value="ECO:0007669"/>
    <property type="project" value="UniProtKB-KW"/>
</dbReference>
<dbReference type="GO" id="GO:0003723">
    <property type="term" value="F:RNA binding"/>
    <property type="evidence" value="ECO:0000314"/>
    <property type="project" value="UniProtKB"/>
</dbReference>
<dbReference type="GO" id="GO:0004521">
    <property type="term" value="F:RNA endonuclease activity"/>
    <property type="evidence" value="ECO:0000314"/>
    <property type="project" value="UniProtKB"/>
</dbReference>
<dbReference type="GO" id="GO:0006353">
    <property type="term" value="P:DNA-templated transcription termination"/>
    <property type="evidence" value="ECO:0000314"/>
    <property type="project" value="UniProtKB"/>
</dbReference>
<dbReference type="CDD" id="cd22532">
    <property type="entry name" value="KH-II_CPSF_arch_rpt1"/>
    <property type="match status" value="1"/>
</dbReference>
<dbReference type="CDD" id="cd02410">
    <property type="entry name" value="KH-II_CPSF_arch_rpt2"/>
    <property type="match status" value="1"/>
</dbReference>
<dbReference type="CDD" id="cd16295">
    <property type="entry name" value="TTHA0252-CPSF-like_MBL-fold"/>
    <property type="match status" value="1"/>
</dbReference>
<dbReference type="Gene3D" id="3.30.300.20">
    <property type="match status" value="1"/>
</dbReference>
<dbReference type="Gene3D" id="3.30.300.230">
    <property type="match status" value="1"/>
</dbReference>
<dbReference type="Gene3D" id="3.40.50.10890">
    <property type="match status" value="1"/>
</dbReference>
<dbReference type="Gene3D" id="3.60.15.10">
    <property type="entry name" value="Ribonuclease Z/Hydroxyacylglutathione hydrolase-like"/>
    <property type="match status" value="1"/>
</dbReference>
<dbReference type="HAMAP" id="MF_00870">
    <property type="entry name" value="FttA"/>
    <property type="match status" value="1"/>
</dbReference>
<dbReference type="InterPro" id="IPR019975">
    <property type="entry name" value="aCPSF1"/>
</dbReference>
<dbReference type="InterPro" id="IPR022712">
    <property type="entry name" value="Beta_Casp"/>
</dbReference>
<dbReference type="InterPro" id="IPR004087">
    <property type="entry name" value="KH_dom"/>
</dbReference>
<dbReference type="InterPro" id="IPR015946">
    <property type="entry name" value="KH_dom-like_a/b"/>
</dbReference>
<dbReference type="InterPro" id="IPR004044">
    <property type="entry name" value="KH_dom_type_2"/>
</dbReference>
<dbReference type="InterPro" id="IPR050698">
    <property type="entry name" value="MBL"/>
</dbReference>
<dbReference type="InterPro" id="IPR001279">
    <property type="entry name" value="Metallo-B-lactamas"/>
</dbReference>
<dbReference type="InterPro" id="IPR036866">
    <property type="entry name" value="RibonucZ/Hydroxyglut_hydro"/>
</dbReference>
<dbReference type="InterPro" id="IPR011108">
    <property type="entry name" value="RMMBL"/>
</dbReference>
<dbReference type="InterPro" id="IPR033769">
    <property type="entry name" value="TffA_KH"/>
</dbReference>
<dbReference type="NCBIfam" id="TIGR03675">
    <property type="entry name" value="arCOG00543"/>
    <property type="match status" value="1"/>
</dbReference>
<dbReference type="PANTHER" id="PTHR11203:SF51">
    <property type="entry name" value="CLEAVAGE AND POLYADENYLATION SPECIFICITY FACTOR"/>
    <property type="match status" value="1"/>
</dbReference>
<dbReference type="PANTHER" id="PTHR11203">
    <property type="entry name" value="CLEAVAGE AND POLYADENYLATION SPECIFICITY FACTOR FAMILY MEMBER"/>
    <property type="match status" value="1"/>
</dbReference>
<dbReference type="Pfam" id="PF10996">
    <property type="entry name" value="Beta-Casp"/>
    <property type="match status" value="1"/>
</dbReference>
<dbReference type="Pfam" id="PF07650">
    <property type="entry name" value="KH_2"/>
    <property type="match status" value="1"/>
</dbReference>
<dbReference type="Pfam" id="PF17214">
    <property type="entry name" value="KH_TffA"/>
    <property type="match status" value="1"/>
</dbReference>
<dbReference type="Pfam" id="PF00753">
    <property type="entry name" value="Lactamase_B"/>
    <property type="match status" value="1"/>
</dbReference>
<dbReference type="Pfam" id="PF07521">
    <property type="entry name" value="RMMBL"/>
    <property type="match status" value="1"/>
</dbReference>
<dbReference type="SMART" id="SM01027">
    <property type="entry name" value="Beta-Casp"/>
    <property type="match status" value="1"/>
</dbReference>
<dbReference type="SMART" id="SM00322">
    <property type="entry name" value="KH"/>
    <property type="match status" value="1"/>
</dbReference>
<dbReference type="SMART" id="SM00849">
    <property type="entry name" value="Lactamase_B"/>
    <property type="match status" value="1"/>
</dbReference>
<dbReference type="SUPFAM" id="SSF56281">
    <property type="entry name" value="Metallo-hydrolase/oxidoreductase"/>
    <property type="match status" value="1"/>
</dbReference>
<organism>
    <name type="scientific">Methanococcus maripaludis (strain DSM 14266 / JCM 13030 / NBRC 101832 / S2 / LL)</name>
    <dbReference type="NCBI Taxonomy" id="267377"/>
    <lineage>
        <taxon>Archaea</taxon>
        <taxon>Methanobacteriati</taxon>
        <taxon>Methanobacteriota</taxon>
        <taxon>Methanomada group</taxon>
        <taxon>Methanococci</taxon>
        <taxon>Methanococcales</taxon>
        <taxon>Methanococcaceae</taxon>
        <taxon>Methanococcus</taxon>
    </lineage>
</organism>
<keyword id="KW-0158">Chromosome</keyword>
<keyword id="KW-0238">DNA-binding</keyword>
<keyword id="KW-0255">Endonuclease</keyword>
<keyword id="KW-0269">Exonuclease</keyword>
<keyword id="KW-0378">Hydrolase</keyword>
<keyword id="KW-0479">Metal-binding</keyword>
<keyword id="KW-0540">Nuclease</keyword>
<keyword id="KW-1185">Reference proteome</keyword>
<keyword id="KW-0694">RNA-binding</keyword>
<keyword id="KW-0804">Transcription</keyword>
<keyword id="KW-0805">Transcription regulation</keyword>
<keyword id="KW-0806">Transcription termination</keyword>
<keyword id="KW-0862">Zinc</keyword>
<evidence type="ECO:0000255" key="1">
    <source>
        <dbReference type="HAMAP-Rule" id="MF_00870"/>
    </source>
</evidence>
<evidence type="ECO:0000269" key="2">
    <source>
    </source>
</evidence>
<evidence type="ECO:0000269" key="3">
    <source>
    </source>
</evidence>
<evidence type="ECO:0000303" key="4">
    <source>
    </source>
</evidence>
<evidence type="ECO:0000305" key="5"/>
<evidence type="ECO:0000305" key="6">
    <source>
    </source>
</evidence>
<evidence type="ECO:0000312" key="7">
    <source>
        <dbReference type="EMBL" id="CAF30250.1"/>
    </source>
</evidence>
<comment type="function">
    <text evidence="1">Terminates transcription on the whole genome. Termination is linked to FttA-mediated RNA cleavage and does not require NTP hydrolysis. Cleaves endonucleolytically at the RNA exit channel of RNA polymerase (RNAP); the 5'-3' exonuclease activity of this protein degrades the nascent RNA released from RNAP.</text>
</comment>
<comment type="function">
    <text evidence="2 3">Terminates transcription genome-wide (PubMed:32857850, PubMed:34964713). Transcription termination is most effective in vivo on RNAs with more than one U4-tract in their 3'-ends (including non-protein coding RNAs); U4-tracts are recognized by this protein (PubMed:34964713). Also plays a role in termination of RNAs without U-tracts by an unknown mechanism (PubMed:34964713). Has endonuclease activity after U-rich tracts in transcription termination sites (PubMed:32857850). Binds RNA at U4-tracts found directly upstream of the experimentally determined transcription termination sites; binds preferentially to RNAs with more U4-tracts at their 3'-ends (PubMed:34964713).</text>
</comment>
<comment type="cofactor">
    <cofactor evidence="1">
        <name>Zn(2+)</name>
        <dbReference type="ChEBI" id="CHEBI:29105"/>
    </cofactor>
    <text evidence="1">Binds 2 Zn(2+) ions, which are required for nuclease activity.</text>
</comment>
<comment type="subunit">
    <text evidence="1 2 6">Homodimer (Probable) (PubMed:34964713). Interacts with RNA polymerase (RNAP); interaction is not dependent on DNA or RNA (PubMed:32857850). Interacts with the Spt4-Spt5 complex (By similarity).</text>
</comment>
<comment type="subcellular location">
    <subcellularLocation>
        <location evidence="2">Chromosome</location>
    </subcellularLocation>
    <text evidence="2">Associated with chromatin (PubMed:32857850).</text>
</comment>
<comment type="domain">
    <text evidence="3 6">The 2 KH domains (expressed as residues 1-149) bind 4U-tracts in the 3'-end of transcripts; binds preferentially to RNAs with more U4-tracts at their 3'-ends (PubMed:34964713). Deletion of this region (exact residues are not given) does not complement the depletion strain even in the presence of wild-type protein, although the KH domain deletion also copurifies with RNAP (PubMed:34964713). The extreme C-terminus is required for dimerization (Probable) (PubMed:34964713).</text>
</comment>
<comment type="disruption phenotype">
    <text evidence="2 3">Essential, it cannot be disrupted. Strains expressing about 20% of protein at 22 degrees Celsius (depleted for FttA) grow more slowly and bulk mRNA has a longer half-life, with genome-wide transcriptional read-through occurring (PubMed:32857850). Upregulates archaeal flagella regulator earA which results in increased motility (PubMed:32857850). Inversely changes expression of highly- and poorly-transcribed genes (PubMed:32857850). The depleted strain has greatly decreased genome-wide transcription termination (PubMed:34964713).</text>
</comment>
<comment type="miscellaneous">
    <text evidence="2">Present at 0.125 pmol per ug total cell proteins in mid-exponential phase and at 0.14 pmol per ug total cell proteins in stationary phase at 37 degrees Celsius; RpoL (subunit of RNAP) is estimated at 0.072 pmol and 0.086 pmol per ug total cell proteins in med-exponential and stationary phases respectively (PubMed:32857850).</text>
</comment>
<comment type="similarity">
    <text evidence="1 5">Belongs to the metallo-beta-lactamase superfamily. RNA-metabolizing metallo-beta-lactamase-like family. FttA subfamily.</text>
</comment>
<feature type="chain" id="PRO_0000460391" description="Transcription termination factor FttA">
    <location>
        <begin position="1"/>
        <end position="635"/>
    </location>
</feature>
<feature type="region of interest" description="KHa" evidence="6">
    <location>
        <begin position="1"/>
        <end position="69"/>
    </location>
</feature>
<feature type="region of interest" description="KHa" evidence="1">
    <location>
        <begin position="4"/>
        <end position="69"/>
    </location>
</feature>
<feature type="region of interest" description="KHb" evidence="1 6">
    <location>
        <begin position="70"/>
        <end position="137"/>
    </location>
</feature>
<feature type="region of interest" description="Metallo-beta-lactamase N-terminus" evidence="6">
    <location>
        <begin position="179"/>
        <end position="383"/>
    </location>
</feature>
<feature type="region of interest" description="Metallo-beta-lactamase N-terminus" evidence="1">
    <location>
        <begin position="179"/>
        <end position="382"/>
    </location>
</feature>
<feature type="region of interest" description="Beta-Casp" evidence="6">
    <location>
        <begin position="180"/>
        <end position="577"/>
    </location>
</feature>
<feature type="region of interest" description="Beta-Casp" evidence="1">
    <location>
        <begin position="383"/>
        <end position="576"/>
    </location>
</feature>
<feature type="region of interest" description="Metallo-beta-lactamase C-terminus" evidence="1">
    <location>
        <begin position="577"/>
        <end position="635"/>
    </location>
</feature>
<feature type="region of interest" description="Metallo-beta-lactamase C-terminus" evidence="6">
    <location>
        <begin position="578"/>
        <end position="635"/>
    </location>
</feature>
<feature type="binding site" evidence="1">
    <location>
        <position position="241"/>
    </location>
    <ligand>
        <name>Zn(2+)</name>
        <dbReference type="ChEBI" id="CHEBI:29105"/>
        <label>1</label>
    </ligand>
</feature>
<feature type="binding site" evidence="1">
    <location>
        <position position="243"/>
    </location>
    <ligand>
        <name>Zn(2+)</name>
        <dbReference type="ChEBI" id="CHEBI:29105"/>
        <label>1</label>
    </ligand>
</feature>
<feature type="binding site" evidence="1">
    <location>
        <position position="245"/>
    </location>
    <ligand>
        <name>Zn(2+)</name>
        <dbReference type="ChEBI" id="CHEBI:29105"/>
        <label>2</label>
    </ligand>
</feature>
<feature type="binding site" evidence="1">
    <location>
        <position position="246"/>
    </location>
    <ligand>
        <name>Zn(2+)</name>
        <dbReference type="ChEBI" id="CHEBI:29105"/>
        <label>2</label>
    </ligand>
</feature>
<feature type="binding site" evidence="1">
    <location>
        <position position="328"/>
    </location>
    <ligand>
        <name>Zn(2+)</name>
        <dbReference type="ChEBI" id="CHEBI:29105"/>
        <label>1</label>
    </ligand>
</feature>
<feature type="binding site" evidence="1">
    <location>
        <position position="351"/>
    </location>
    <ligand>
        <name>Zn(2+)</name>
        <dbReference type="ChEBI" id="CHEBI:29105"/>
        <label>1</label>
    </ligand>
</feature>
<feature type="binding site" evidence="1">
    <location>
        <position position="351"/>
    </location>
    <ligand>
        <name>Zn(2+)</name>
        <dbReference type="ChEBI" id="CHEBI:29105"/>
        <label>2</label>
    </ligand>
</feature>
<feature type="binding site" evidence="1">
    <location>
        <position position="602"/>
    </location>
    <ligand>
        <name>Zn(2+)</name>
        <dbReference type="ChEBI" id="CHEBI:29105"/>
        <label>2</label>
    </ligand>
</feature>
<feature type="mutagenesis site" description="Loss of endonuclease activity, does not restore growth at 22 degrees Celsius in a depleted strain. Decreases termination in vivo." evidence="2 3">
    <original>HLDH</original>
    <variation>ALDA</variation>
    <location>
        <begin position="243"/>
        <end position="246"/>
    </location>
</feature>
<feature type="mutagenesis site" description="Does not complement depleted strain; does not restore growth or correct transcription termination in vivo." evidence="3">
    <location>
        <begin position="623"/>
        <end position="635"/>
    </location>
</feature>
<sequence length="635" mass="71231">MSAEDILNEIKAAVINKAPGNAVITDVEFEGSEVVIYAKNPELFSNNLIKEFARDFRKRLAIRPDPSVLVEPDIAKDKILKIVPEDAEITNCIFDANTGEVIIESKKPGLVIGKEGSTLEDIKKAIQWAPKPVRTPPIPSDTIKAIRATMYRERADVKDILRRIGRRIHRDVRLRDDSWVRTSFLGGSREVGRTCLYHQTPESRILVDCGINIAVEDEKAFPHFDAPEFSIEEIDAVVVTHAHLDHCGFIPGLFRYGYDGPVYCTKPTRDLMTLLQKDYVDITEKEGKNVPYSSKDIKNCIKHTIPLDYGVTTDIAPAIKLTMHNAGHILGSAIAHCHVGDGLYNVAYTGDIKFEASRLLEPAVCQFPRLETLIIESTYGGYDDVLPERDETEKEFLRVIAETIARKGKAIIPVFGIGRAQELMLVLEEGYNQGIFNAPVYLDGMIWEATAIHTAYPEYLSKNMRNRIFHEGDNPFLSEVFKKVKNTNDRRNIMDSDEPGIILTTSGMLSGGPSVEYFKNLADDEKNSIVFVGYQSEGTLGRKIQKGFKEIPLMGKNGRSKAVKVNLSVHTLEGFSGHSDRKQLIKYLRKLKPIPDRILTVHGEVSKCIDLASTAYKLFKKETKAPMNLDSIRLR</sequence>
<protein>
    <recommendedName>
        <fullName evidence="1">Transcription termination factor FttA</fullName>
        <ecNumber evidence="1 2">3.1.-.-</ecNumber>
    </recommendedName>
    <alternativeName>
        <fullName evidence="4">Ribonuclease aCPSF1</fullName>
    </alternativeName>
</protein>
<reference evidence="7" key="1">
    <citation type="journal article" date="2004" name="J. Bacteriol.">
        <title>Complete genome sequence of the genetically tractable hydrogenotrophic methanogen Methanococcus maripaludis.</title>
        <authorList>
            <person name="Hendrickson E.L."/>
            <person name="Kaul R."/>
            <person name="Zhou Y."/>
            <person name="Bovee D."/>
            <person name="Chapman P."/>
            <person name="Chung J."/>
            <person name="Conway de Macario E."/>
            <person name="Dodsworth J.A."/>
            <person name="Gillett W."/>
            <person name="Graham D.E."/>
            <person name="Hackett M."/>
            <person name="Haydock A.K."/>
            <person name="Kang A."/>
            <person name="Land M.L."/>
            <person name="Levy R."/>
            <person name="Lie T.J."/>
            <person name="Major T.A."/>
            <person name="Moore B.C."/>
            <person name="Porat I."/>
            <person name="Palmeiri A."/>
            <person name="Rouse G."/>
            <person name="Saenphimmachak C."/>
            <person name="Soell D."/>
            <person name="Van Dien S."/>
            <person name="Wang T."/>
            <person name="Whitman W.B."/>
            <person name="Xia Q."/>
            <person name="Zhang Y."/>
            <person name="Larimer F.W."/>
            <person name="Olson M.V."/>
            <person name="Leigh J.A."/>
        </authorList>
    </citation>
    <scope>NUCLEOTIDE SEQUENCE [LARGE SCALE GENOMIC DNA]</scope>
    <source>
        <strain>DSM 14266 / JCM 13030 / NBRC 101832 / S2 / LL</strain>
    </source>
</reference>
<reference key="2">
    <citation type="journal article" date="2020" name="Nucleic Acids Res.">
        <title>The conserved ribonuclease aCPSF1 triggers genome-wide transcription termination of Archaea via a 3'-end cleavage mode.</title>
        <authorList>
            <person name="Yue L."/>
            <person name="Li J."/>
            <person name="Zhang B."/>
            <person name="Qi L."/>
            <person name="Li Z."/>
            <person name="Zhao F."/>
            <person name="Li L."/>
            <person name="Zheng X."/>
            <person name="Dong X."/>
        </authorList>
    </citation>
    <scope>FUNCTION</scope>
    <scope>ENDORIBONUCLEASE (CATALYTIC) ACTIVITY</scope>
    <scope>SUBUNIT</scope>
    <scope>SUBCELLULAR LOCATION</scope>
    <scope>DISRUPTION PHENOTYPE</scope>
    <scope>PROTEIN ABUNDANCE</scope>
    <scope>DNA-BINDING</scope>
    <scope>RNA-BINDING</scope>
    <scope>MUTAGENESIS OF 243-HIS--HIS-246</scope>
    <source>
        <strain>DSM 14266 / JCM 13030 / NBRC 101832 / S2 / LL</strain>
    </source>
</reference>
<reference key="3">
    <citation type="journal article" date="2021" name="Elife">
        <title>aCPSF1 cooperates with terminator U-tract to dictate archaeal transcription termination efficacy.</title>
        <authorList>
            <person name="Li J."/>
            <person name="Yue L."/>
            <person name="Li Z."/>
            <person name="Zhang W."/>
            <person name="Zhang B."/>
            <person name="Zhao F."/>
            <person name="Dong X."/>
        </authorList>
    </citation>
    <scope>FUNCTION</scope>
    <scope>SUBUNIT</scope>
    <scope>DOMAIN</scope>
    <scope>DISRUPTION PHENOTYPE</scope>
    <scope>RNA-BINDING</scope>
    <scope>MUTAGENESIS OF 243-HIS--HIS-246 AND 623-THR--ARG-635</scope>
    <source>
        <strain>DSM 14266 / JCM 13030 / NBRC 101832 / S2 / LL</strain>
    </source>
</reference>
<gene>
    <name evidence="1" type="primary">fttA</name>
    <name evidence="7" type="ordered locus">MMP0694</name>
</gene>
<proteinExistence type="evidence at protein level"/>